<comment type="function">
    <text evidence="1">Large subunit of the glutamine-dependent carbamoyl phosphate synthetase (CPSase). CPSase catalyzes the formation of carbamoyl phosphate from the ammonia moiety of glutamine, carbonate, and phosphate donated by ATP, constituting the first step of 2 biosynthetic pathways, one leading to arginine and/or urea and the other to pyrimidine nucleotides. The large subunit (synthetase) binds the substrates ammonia (free or transferred from glutamine from the small subunit), hydrogencarbonate and ATP and carries out an ATP-coupled ligase reaction, activating hydrogencarbonate by forming carboxy phosphate which reacts with ammonia to form carbamoyl phosphate.</text>
</comment>
<comment type="catalytic activity">
    <reaction evidence="1">
        <text>hydrogencarbonate + L-glutamine + 2 ATP + H2O = carbamoyl phosphate + L-glutamate + 2 ADP + phosphate + 2 H(+)</text>
        <dbReference type="Rhea" id="RHEA:18633"/>
        <dbReference type="ChEBI" id="CHEBI:15377"/>
        <dbReference type="ChEBI" id="CHEBI:15378"/>
        <dbReference type="ChEBI" id="CHEBI:17544"/>
        <dbReference type="ChEBI" id="CHEBI:29985"/>
        <dbReference type="ChEBI" id="CHEBI:30616"/>
        <dbReference type="ChEBI" id="CHEBI:43474"/>
        <dbReference type="ChEBI" id="CHEBI:58228"/>
        <dbReference type="ChEBI" id="CHEBI:58359"/>
        <dbReference type="ChEBI" id="CHEBI:456216"/>
        <dbReference type="EC" id="6.3.5.5"/>
    </reaction>
</comment>
<comment type="catalytic activity">
    <molecule>Carbamoyl phosphate synthase large chain</molecule>
    <reaction evidence="1">
        <text>hydrogencarbonate + NH4(+) + 2 ATP = carbamoyl phosphate + 2 ADP + phosphate + 2 H(+)</text>
        <dbReference type="Rhea" id="RHEA:18029"/>
        <dbReference type="ChEBI" id="CHEBI:15378"/>
        <dbReference type="ChEBI" id="CHEBI:17544"/>
        <dbReference type="ChEBI" id="CHEBI:28938"/>
        <dbReference type="ChEBI" id="CHEBI:30616"/>
        <dbReference type="ChEBI" id="CHEBI:43474"/>
        <dbReference type="ChEBI" id="CHEBI:58228"/>
        <dbReference type="ChEBI" id="CHEBI:456216"/>
        <dbReference type="EC" id="6.3.4.16"/>
    </reaction>
</comment>
<comment type="cofactor">
    <cofactor evidence="1">
        <name>Mg(2+)</name>
        <dbReference type="ChEBI" id="CHEBI:18420"/>
    </cofactor>
    <cofactor evidence="1">
        <name>Mn(2+)</name>
        <dbReference type="ChEBI" id="CHEBI:29035"/>
    </cofactor>
    <text evidence="1">Binds 4 Mg(2+) or Mn(2+) ions per subunit.</text>
</comment>
<comment type="pathway">
    <text evidence="1">Amino-acid biosynthesis; L-arginine biosynthesis; carbamoyl phosphate from bicarbonate: step 1/1.</text>
</comment>
<comment type="pathway">
    <text evidence="1">Pyrimidine metabolism; UMP biosynthesis via de novo pathway; (S)-dihydroorotate from bicarbonate: step 1/3.</text>
</comment>
<comment type="subunit">
    <text evidence="1">Composed of two chains; the small (or glutamine) chain promotes the hydrolysis of glutamine to ammonia, which is used by the large (or ammonia) chain to synthesize carbamoyl phosphate. Tetramer of heterodimers (alpha,beta)4.</text>
</comment>
<comment type="domain">
    <text evidence="1">The large subunit is composed of 2 ATP-grasp domains that are involved in binding the 2 ATP molecules needed for carbamoyl phosphate synthesis. The N-terminal ATP-grasp domain (referred to as the carboxyphosphate synthetic component) catalyzes the ATP-dependent phosphorylation of hydrogencarbonate to carboxyphosphate and the subsequent nucleophilic attack by ammonia to form a carbamate intermediate. The C-terminal ATP-grasp domain (referred to as the carbamoyl phosphate synthetic component) then catalyzes the phosphorylation of carbamate with the second ATP to form the end product carbamoyl phosphate. The reactive and unstable enzyme intermediates are sequentially channeled from one active site to the next through the interior of the protein over a distance of at least 96 A.</text>
</comment>
<comment type="similarity">
    <text evidence="1">Belongs to the CarB family.</text>
</comment>
<comment type="sequence caution" evidence="2">
    <conflict type="erroneous initiation">
        <sequence resource="EMBL-CDS" id="AAN70295"/>
    </conflict>
</comment>
<reference key="1">
    <citation type="journal article" date="2002" name="Environ. Microbiol.">
        <title>Complete genome sequence and comparative analysis of the metabolically versatile Pseudomonas putida KT2440.</title>
        <authorList>
            <person name="Nelson K.E."/>
            <person name="Weinel C."/>
            <person name="Paulsen I.T."/>
            <person name="Dodson R.J."/>
            <person name="Hilbert H."/>
            <person name="Martins dos Santos V.A.P."/>
            <person name="Fouts D.E."/>
            <person name="Gill S.R."/>
            <person name="Pop M."/>
            <person name="Holmes M."/>
            <person name="Brinkac L.M."/>
            <person name="Beanan M.J."/>
            <person name="DeBoy R.T."/>
            <person name="Daugherty S.C."/>
            <person name="Kolonay J.F."/>
            <person name="Madupu R."/>
            <person name="Nelson W.C."/>
            <person name="White O."/>
            <person name="Peterson J.D."/>
            <person name="Khouri H.M."/>
            <person name="Hance I."/>
            <person name="Chris Lee P."/>
            <person name="Holtzapple E.K."/>
            <person name="Scanlan D."/>
            <person name="Tran K."/>
            <person name="Moazzez A."/>
            <person name="Utterback T.R."/>
            <person name="Rizzo M."/>
            <person name="Lee K."/>
            <person name="Kosack D."/>
            <person name="Moestl D."/>
            <person name="Wedler H."/>
            <person name="Lauber J."/>
            <person name="Stjepandic D."/>
            <person name="Hoheisel J."/>
            <person name="Straetz M."/>
            <person name="Heim S."/>
            <person name="Kiewitz C."/>
            <person name="Eisen J.A."/>
            <person name="Timmis K.N."/>
            <person name="Duesterhoeft A."/>
            <person name="Tuemmler B."/>
            <person name="Fraser C.M."/>
        </authorList>
    </citation>
    <scope>NUCLEOTIDE SEQUENCE [LARGE SCALE GENOMIC DNA]</scope>
    <source>
        <strain>ATCC 47054 / DSM 6125 / CFBP 8728 / NCIMB 11950 / KT2440</strain>
    </source>
</reference>
<dbReference type="EC" id="6.3.4.16" evidence="1"/>
<dbReference type="EC" id="6.3.5.5" evidence="1"/>
<dbReference type="EMBL" id="AE015451">
    <property type="protein sequence ID" value="AAN70295.1"/>
    <property type="status" value="ALT_INIT"/>
    <property type="molecule type" value="Genomic_DNA"/>
</dbReference>
<dbReference type="RefSeq" id="NP_746831.3">
    <property type="nucleotide sequence ID" value="NC_002947.4"/>
</dbReference>
<dbReference type="RefSeq" id="WP_010955363.1">
    <property type="nucleotide sequence ID" value="NZ_CP169744.1"/>
</dbReference>
<dbReference type="SMR" id="Q88DU6"/>
<dbReference type="STRING" id="160488.PP_4723"/>
<dbReference type="PaxDb" id="160488-PP_4723"/>
<dbReference type="GeneID" id="83682440"/>
<dbReference type="KEGG" id="ppu:PP_4723"/>
<dbReference type="PATRIC" id="fig|160488.4.peg.5034"/>
<dbReference type="eggNOG" id="COG0458">
    <property type="taxonomic scope" value="Bacteria"/>
</dbReference>
<dbReference type="HOGENOM" id="CLU_000513_1_2_6"/>
<dbReference type="OrthoDB" id="9804197at2"/>
<dbReference type="PhylomeDB" id="Q88DU6"/>
<dbReference type="UniPathway" id="UPA00068">
    <property type="reaction ID" value="UER00171"/>
</dbReference>
<dbReference type="UniPathway" id="UPA00070">
    <property type="reaction ID" value="UER00115"/>
</dbReference>
<dbReference type="Proteomes" id="UP000000556">
    <property type="component" value="Chromosome"/>
</dbReference>
<dbReference type="GO" id="GO:0005737">
    <property type="term" value="C:cytoplasm"/>
    <property type="evidence" value="ECO:0007669"/>
    <property type="project" value="TreeGrafter"/>
</dbReference>
<dbReference type="GO" id="GO:0005524">
    <property type="term" value="F:ATP binding"/>
    <property type="evidence" value="ECO:0007669"/>
    <property type="project" value="UniProtKB-UniRule"/>
</dbReference>
<dbReference type="GO" id="GO:0004087">
    <property type="term" value="F:carbamoyl-phosphate synthase (ammonia) activity"/>
    <property type="evidence" value="ECO:0007669"/>
    <property type="project" value="RHEA"/>
</dbReference>
<dbReference type="GO" id="GO:0004088">
    <property type="term" value="F:carbamoyl-phosphate synthase (glutamine-hydrolyzing) activity"/>
    <property type="evidence" value="ECO:0007669"/>
    <property type="project" value="UniProtKB-UniRule"/>
</dbReference>
<dbReference type="GO" id="GO:0046872">
    <property type="term" value="F:metal ion binding"/>
    <property type="evidence" value="ECO:0007669"/>
    <property type="project" value="UniProtKB-KW"/>
</dbReference>
<dbReference type="GO" id="GO:0044205">
    <property type="term" value="P:'de novo' UMP biosynthetic process"/>
    <property type="evidence" value="ECO:0007669"/>
    <property type="project" value="UniProtKB-UniRule"/>
</dbReference>
<dbReference type="GO" id="GO:0006541">
    <property type="term" value="P:glutamine metabolic process"/>
    <property type="evidence" value="ECO:0007669"/>
    <property type="project" value="TreeGrafter"/>
</dbReference>
<dbReference type="GO" id="GO:0006526">
    <property type="term" value="P:L-arginine biosynthetic process"/>
    <property type="evidence" value="ECO:0007669"/>
    <property type="project" value="UniProtKB-UniRule"/>
</dbReference>
<dbReference type="CDD" id="cd01424">
    <property type="entry name" value="MGS_CPS_II"/>
    <property type="match status" value="1"/>
</dbReference>
<dbReference type="FunFam" id="1.10.1030.10:FF:000002">
    <property type="entry name" value="Carbamoyl-phosphate synthase large chain"/>
    <property type="match status" value="1"/>
</dbReference>
<dbReference type="FunFam" id="3.30.1490.20:FF:000001">
    <property type="entry name" value="Carbamoyl-phosphate synthase large chain"/>
    <property type="match status" value="1"/>
</dbReference>
<dbReference type="FunFam" id="3.30.470.20:FF:000007">
    <property type="entry name" value="Carbamoyl-phosphate synthase large chain"/>
    <property type="match status" value="1"/>
</dbReference>
<dbReference type="FunFam" id="3.30.470.20:FF:000013">
    <property type="entry name" value="Carbamoyl-phosphate synthase large chain"/>
    <property type="match status" value="1"/>
</dbReference>
<dbReference type="FunFam" id="3.40.50.1380:FF:000004">
    <property type="entry name" value="Carbamoyl-phosphate synthase large chain"/>
    <property type="match status" value="1"/>
</dbReference>
<dbReference type="FunFam" id="3.40.50.20:FF:000001">
    <property type="entry name" value="Carbamoyl-phosphate synthase large chain"/>
    <property type="match status" value="1"/>
</dbReference>
<dbReference type="FunFam" id="3.40.50.20:FF:000003">
    <property type="entry name" value="Carbamoyl-phosphate synthase large chain"/>
    <property type="match status" value="1"/>
</dbReference>
<dbReference type="Gene3D" id="3.40.50.20">
    <property type="match status" value="2"/>
</dbReference>
<dbReference type="Gene3D" id="3.30.470.20">
    <property type="entry name" value="ATP-grasp fold, B domain"/>
    <property type="match status" value="2"/>
</dbReference>
<dbReference type="Gene3D" id="1.10.1030.10">
    <property type="entry name" value="Carbamoyl-phosphate synthetase, large subunit oligomerisation domain"/>
    <property type="match status" value="1"/>
</dbReference>
<dbReference type="Gene3D" id="3.40.50.1380">
    <property type="entry name" value="Methylglyoxal synthase-like domain"/>
    <property type="match status" value="1"/>
</dbReference>
<dbReference type="HAMAP" id="MF_01210_A">
    <property type="entry name" value="CPSase_L_chain_A"/>
    <property type="match status" value="1"/>
</dbReference>
<dbReference type="HAMAP" id="MF_01210_B">
    <property type="entry name" value="CPSase_L_chain_B"/>
    <property type="match status" value="1"/>
</dbReference>
<dbReference type="InterPro" id="IPR011761">
    <property type="entry name" value="ATP-grasp"/>
</dbReference>
<dbReference type="InterPro" id="IPR006275">
    <property type="entry name" value="CarbamoylP_synth_lsu"/>
</dbReference>
<dbReference type="InterPro" id="IPR005480">
    <property type="entry name" value="CarbamoylP_synth_lsu_oligo"/>
</dbReference>
<dbReference type="InterPro" id="IPR036897">
    <property type="entry name" value="CarbamoylP_synth_lsu_oligo_sf"/>
</dbReference>
<dbReference type="InterPro" id="IPR005479">
    <property type="entry name" value="CbamoylP_synth_lsu-like_ATP-bd"/>
</dbReference>
<dbReference type="InterPro" id="IPR005483">
    <property type="entry name" value="CbamoylP_synth_lsu_CPSase_dom"/>
</dbReference>
<dbReference type="InterPro" id="IPR011607">
    <property type="entry name" value="MGS-like_dom"/>
</dbReference>
<dbReference type="InterPro" id="IPR036914">
    <property type="entry name" value="MGS-like_dom_sf"/>
</dbReference>
<dbReference type="InterPro" id="IPR033937">
    <property type="entry name" value="MGS_CPS_CarB"/>
</dbReference>
<dbReference type="InterPro" id="IPR016185">
    <property type="entry name" value="PreATP-grasp_dom_sf"/>
</dbReference>
<dbReference type="NCBIfam" id="TIGR01369">
    <property type="entry name" value="CPSaseII_lrg"/>
    <property type="match status" value="1"/>
</dbReference>
<dbReference type="NCBIfam" id="NF003671">
    <property type="entry name" value="PRK05294.1"/>
    <property type="match status" value="1"/>
</dbReference>
<dbReference type="NCBIfam" id="NF009455">
    <property type="entry name" value="PRK12815.1"/>
    <property type="match status" value="1"/>
</dbReference>
<dbReference type="PANTHER" id="PTHR11405:SF53">
    <property type="entry name" value="CARBAMOYL-PHOSPHATE SYNTHASE [AMMONIA], MITOCHONDRIAL"/>
    <property type="match status" value="1"/>
</dbReference>
<dbReference type="PANTHER" id="PTHR11405">
    <property type="entry name" value="CARBAMOYLTRANSFERASE FAMILY MEMBER"/>
    <property type="match status" value="1"/>
</dbReference>
<dbReference type="Pfam" id="PF02786">
    <property type="entry name" value="CPSase_L_D2"/>
    <property type="match status" value="2"/>
</dbReference>
<dbReference type="Pfam" id="PF02787">
    <property type="entry name" value="CPSase_L_D3"/>
    <property type="match status" value="1"/>
</dbReference>
<dbReference type="Pfam" id="PF02142">
    <property type="entry name" value="MGS"/>
    <property type="match status" value="1"/>
</dbReference>
<dbReference type="PRINTS" id="PR00098">
    <property type="entry name" value="CPSASE"/>
</dbReference>
<dbReference type="SMART" id="SM01096">
    <property type="entry name" value="CPSase_L_D3"/>
    <property type="match status" value="1"/>
</dbReference>
<dbReference type="SMART" id="SM00851">
    <property type="entry name" value="MGS"/>
    <property type="match status" value="1"/>
</dbReference>
<dbReference type="SUPFAM" id="SSF48108">
    <property type="entry name" value="Carbamoyl phosphate synthetase, large subunit connection domain"/>
    <property type="match status" value="1"/>
</dbReference>
<dbReference type="SUPFAM" id="SSF56059">
    <property type="entry name" value="Glutathione synthetase ATP-binding domain-like"/>
    <property type="match status" value="2"/>
</dbReference>
<dbReference type="SUPFAM" id="SSF52335">
    <property type="entry name" value="Methylglyoxal synthase-like"/>
    <property type="match status" value="1"/>
</dbReference>
<dbReference type="SUPFAM" id="SSF52440">
    <property type="entry name" value="PreATP-grasp domain"/>
    <property type="match status" value="2"/>
</dbReference>
<dbReference type="PROSITE" id="PS50975">
    <property type="entry name" value="ATP_GRASP"/>
    <property type="match status" value="2"/>
</dbReference>
<dbReference type="PROSITE" id="PS00866">
    <property type="entry name" value="CPSASE_1"/>
    <property type="match status" value="2"/>
</dbReference>
<dbReference type="PROSITE" id="PS00867">
    <property type="entry name" value="CPSASE_2"/>
    <property type="match status" value="2"/>
</dbReference>
<dbReference type="PROSITE" id="PS51855">
    <property type="entry name" value="MGS"/>
    <property type="match status" value="1"/>
</dbReference>
<proteinExistence type="inferred from homology"/>
<evidence type="ECO:0000255" key="1">
    <source>
        <dbReference type="HAMAP-Rule" id="MF_01210"/>
    </source>
</evidence>
<evidence type="ECO:0000305" key="2"/>
<accession>Q88DU6</accession>
<gene>
    <name evidence="1" type="primary">carB</name>
    <name type="ordered locus">PP_4723</name>
</gene>
<organism>
    <name type="scientific">Pseudomonas putida (strain ATCC 47054 / DSM 6125 / CFBP 8728 / NCIMB 11950 / KT2440)</name>
    <dbReference type="NCBI Taxonomy" id="160488"/>
    <lineage>
        <taxon>Bacteria</taxon>
        <taxon>Pseudomonadati</taxon>
        <taxon>Pseudomonadota</taxon>
        <taxon>Gammaproteobacteria</taxon>
        <taxon>Pseudomonadales</taxon>
        <taxon>Pseudomonadaceae</taxon>
        <taxon>Pseudomonas</taxon>
    </lineage>
</organism>
<name>CARB_PSEPK</name>
<keyword id="KW-0028">Amino-acid biosynthesis</keyword>
<keyword id="KW-0055">Arginine biosynthesis</keyword>
<keyword id="KW-0067">ATP-binding</keyword>
<keyword id="KW-0436">Ligase</keyword>
<keyword id="KW-0460">Magnesium</keyword>
<keyword id="KW-0464">Manganese</keyword>
<keyword id="KW-0479">Metal-binding</keyword>
<keyword id="KW-0547">Nucleotide-binding</keyword>
<keyword id="KW-0665">Pyrimidine biosynthesis</keyword>
<keyword id="KW-1185">Reference proteome</keyword>
<keyword id="KW-0677">Repeat</keyword>
<feature type="chain" id="PRO_0000145029" description="Carbamoyl phosphate synthase large chain">
    <location>
        <begin position="1"/>
        <end position="1073"/>
    </location>
</feature>
<feature type="domain" description="ATP-grasp 1" evidence="1">
    <location>
        <begin position="133"/>
        <end position="328"/>
    </location>
</feature>
<feature type="domain" description="ATP-grasp 2" evidence="1">
    <location>
        <begin position="678"/>
        <end position="869"/>
    </location>
</feature>
<feature type="domain" description="MGS-like" evidence="1">
    <location>
        <begin position="936"/>
        <end position="1073"/>
    </location>
</feature>
<feature type="region of interest" description="Carboxyphosphate synthetic domain" evidence="1">
    <location>
        <begin position="1"/>
        <end position="403"/>
    </location>
</feature>
<feature type="region of interest" description="Oligomerization domain" evidence="1">
    <location>
        <begin position="404"/>
        <end position="553"/>
    </location>
</feature>
<feature type="region of interest" description="Carbamoyl phosphate synthetic domain" evidence="1">
    <location>
        <begin position="554"/>
        <end position="935"/>
    </location>
</feature>
<feature type="region of interest" description="Allosteric domain" evidence="1">
    <location>
        <begin position="936"/>
        <end position="1073"/>
    </location>
</feature>
<feature type="binding site" evidence="1">
    <location>
        <position position="129"/>
    </location>
    <ligand>
        <name>ATP</name>
        <dbReference type="ChEBI" id="CHEBI:30616"/>
        <label>1</label>
    </ligand>
</feature>
<feature type="binding site" evidence="1">
    <location>
        <position position="169"/>
    </location>
    <ligand>
        <name>ATP</name>
        <dbReference type="ChEBI" id="CHEBI:30616"/>
        <label>1</label>
    </ligand>
</feature>
<feature type="binding site" evidence="1">
    <location>
        <position position="175"/>
    </location>
    <ligand>
        <name>ATP</name>
        <dbReference type="ChEBI" id="CHEBI:30616"/>
        <label>1</label>
    </ligand>
</feature>
<feature type="binding site" evidence="1">
    <location>
        <position position="176"/>
    </location>
    <ligand>
        <name>ATP</name>
        <dbReference type="ChEBI" id="CHEBI:30616"/>
        <label>1</label>
    </ligand>
</feature>
<feature type="binding site" evidence="1">
    <location>
        <position position="208"/>
    </location>
    <ligand>
        <name>ATP</name>
        <dbReference type="ChEBI" id="CHEBI:30616"/>
        <label>1</label>
    </ligand>
</feature>
<feature type="binding site" evidence="1">
    <location>
        <position position="210"/>
    </location>
    <ligand>
        <name>ATP</name>
        <dbReference type="ChEBI" id="CHEBI:30616"/>
        <label>1</label>
    </ligand>
</feature>
<feature type="binding site" evidence="1">
    <location>
        <position position="215"/>
    </location>
    <ligand>
        <name>ATP</name>
        <dbReference type="ChEBI" id="CHEBI:30616"/>
        <label>1</label>
    </ligand>
</feature>
<feature type="binding site" evidence="1">
    <location>
        <position position="241"/>
    </location>
    <ligand>
        <name>ATP</name>
        <dbReference type="ChEBI" id="CHEBI:30616"/>
        <label>1</label>
    </ligand>
</feature>
<feature type="binding site" evidence="1">
    <location>
        <position position="242"/>
    </location>
    <ligand>
        <name>ATP</name>
        <dbReference type="ChEBI" id="CHEBI:30616"/>
        <label>1</label>
    </ligand>
</feature>
<feature type="binding site" evidence="1">
    <location>
        <position position="243"/>
    </location>
    <ligand>
        <name>ATP</name>
        <dbReference type="ChEBI" id="CHEBI:30616"/>
        <label>1</label>
    </ligand>
</feature>
<feature type="binding site" evidence="1">
    <location>
        <position position="285"/>
    </location>
    <ligand>
        <name>ATP</name>
        <dbReference type="ChEBI" id="CHEBI:30616"/>
        <label>1</label>
    </ligand>
</feature>
<feature type="binding site" evidence="1">
    <location>
        <position position="285"/>
    </location>
    <ligand>
        <name>Mg(2+)</name>
        <dbReference type="ChEBI" id="CHEBI:18420"/>
        <label>1</label>
    </ligand>
</feature>
<feature type="binding site" evidence="1">
    <location>
        <position position="285"/>
    </location>
    <ligand>
        <name>Mn(2+)</name>
        <dbReference type="ChEBI" id="CHEBI:29035"/>
        <label>1</label>
    </ligand>
</feature>
<feature type="binding site" evidence="1">
    <location>
        <position position="299"/>
    </location>
    <ligand>
        <name>ATP</name>
        <dbReference type="ChEBI" id="CHEBI:30616"/>
        <label>1</label>
    </ligand>
</feature>
<feature type="binding site" evidence="1">
    <location>
        <position position="299"/>
    </location>
    <ligand>
        <name>Mg(2+)</name>
        <dbReference type="ChEBI" id="CHEBI:18420"/>
        <label>1</label>
    </ligand>
</feature>
<feature type="binding site" evidence="1">
    <location>
        <position position="299"/>
    </location>
    <ligand>
        <name>Mg(2+)</name>
        <dbReference type="ChEBI" id="CHEBI:18420"/>
        <label>2</label>
    </ligand>
</feature>
<feature type="binding site" evidence="1">
    <location>
        <position position="299"/>
    </location>
    <ligand>
        <name>Mn(2+)</name>
        <dbReference type="ChEBI" id="CHEBI:29035"/>
        <label>1</label>
    </ligand>
</feature>
<feature type="binding site" evidence="1">
    <location>
        <position position="299"/>
    </location>
    <ligand>
        <name>Mn(2+)</name>
        <dbReference type="ChEBI" id="CHEBI:29035"/>
        <label>2</label>
    </ligand>
</feature>
<feature type="binding site" evidence="1">
    <location>
        <position position="301"/>
    </location>
    <ligand>
        <name>Mg(2+)</name>
        <dbReference type="ChEBI" id="CHEBI:18420"/>
        <label>2</label>
    </ligand>
</feature>
<feature type="binding site" evidence="1">
    <location>
        <position position="301"/>
    </location>
    <ligand>
        <name>Mn(2+)</name>
        <dbReference type="ChEBI" id="CHEBI:29035"/>
        <label>2</label>
    </ligand>
</feature>
<feature type="binding site" evidence="1">
    <location>
        <position position="714"/>
    </location>
    <ligand>
        <name>ATP</name>
        <dbReference type="ChEBI" id="CHEBI:30616"/>
        <label>2</label>
    </ligand>
</feature>
<feature type="binding site" evidence="1">
    <location>
        <position position="753"/>
    </location>
    <ligand>
        <name>ATP</name>
        <dbReference type="ChEBI" id="CHEBI:30616"/>
        <label>2</label>
    </ligand>
</feature>
<feature type="binding site" evidence="1">
    <location>
        <position position="755"/>
    </location>
    <ligand>
        <name>ATP</name>
        <dbReference type="ChEBI" id="CHEBI:30616"/>
        <label>2</label>
    </ligand>
</feature>
<feature type="binding site" evidence="1">
    <location>
        <position position="760"/>
    </location>
    <ligand>
        <name>ATP</name>
        <dbReference type="ChEBI" id="CHEBI:30616"/>
        <label>2</label>
    </ligand>
</feature>
<feature type="binding site" evidence="1">
    <location>
        <position position="785"/>
    </location>
    <ligand>
        <name>ATP</name>
        <dbReference type="ChEBI" id="CHEBI:30616"/>
        <label>2</label>
    </ligand>
</feature>
<feature type="binding site" evidence="1">
    <location>
        <position position="786"/>
    </location>
    <ligand>
        <name>ATP</name>
        <dbReference type="ChEBI" id="CHEBI:30616"/>
        <label>2</label>
    </ligand>
</feature>
<feature type="binding site" evidence="1">
    <location>
        <position position="787"/>
    </location>
    <ligand>
        <name>ATP</name>
        <dbReference type="ChEBI" id="CHEBI:30616"/>
        <label>2</label>
    </ligand>
</feature>
<feature type="binding site" evidence="1">
    <location>
        <position position="788"/>
    </location>
    <ligand>
        <name>ATP</name>
        <dbReference type="ChEBI" id="CHEBI:30616"/>
        <label>2</label>
    </ligand>
</feature>
<feature type="binding site" evidence="1">
    <location>
        <position position="828"/>
    </location>
    <ligand>
        <name>ATP</name>
        <dbReference type="ChEBI" id="CHEBI:30616"/>
        <label>2</label>
    </ligand>
</feature>
<feature type="binding site" evidence="1">
    <location>
        <position position="828"/>
    </location>
    <ligand>
        <name>Mg(2+)</name>
        <dbReference type="ChEBI" id="CHEBI:18420"/>
        <label>3</label>
    </ligand>
</feature>
<feature type="binding site" evidence="1">
    <location>
        <position position="828"/>
    </location>
    <ligand>
        <name>Mn(2+)</name>
        <dbReference type="ChEBI" id="CHEBI:29035"/>
        <label>3</label>
    </ligand>
</feature>
<feature type="binding site" evidence="1">
    <location>
        <position position="840"/>
    </location>
    <ligand>
        <name>ATP</name>
        <dbReference type="ChEBI" id="CHEBI:30616"/>
        <label>2</label>
    </ligand>
</feature>
<feature type="binding site" evidence="1">
    <location>
        <position position="840"/>
    </location>
    <ligand>
        <name>Mg(2+)</name>
        <dbReference type="ChEBI" id="CHEBI:18420"/>
        <label>3</label>
    </ligand>
</feature>
<feature type="binding site" evidence="1">
    <location>
        <position position="840"/>
    </location>
    <ligand>
        <name>Mg(2+)</name>
        <dbReference type="ChEBI" id="CHEBI:18420"/>
        <label>4</label>
    </ligand>
</feature>
<feature type="binding site" evidence="1">
    <location>
        <position position="840"/>
    </location>
    <ligand>
        <name>Mn(2+)</name>
        <dbReference type="ChEBI" id="CHEBI:29035"/>
        <label>3</label>
    </ligand>
</feature>
<feature type="binding site" evidence="1">
    <location>
        <position position="840"/>
    </location>
    <ligand>
        <name>Mn(2+)</name>
        <dbReference type="ChEBI" id="CHEBI:29035"/>
        <label>4</label>
    </ligand>
</feature>
<feature type="binding site" evidence="1">
    <location>
        <position position="842"/>
    </location>
    <ligand>
        <name>Mg(2+)</name>
        <dbReference type="ChEBI" id="CHEBI:18420"/>
        <label>4</label>
    </ligand>
</feature>
<feature type="binding site" evidence="1">
    <location>
        <position position="842"/>
    </location>
    <ligand>
        <name>Mn(2+)</name>
        <dbReference type="ChEBI" id="CHEBI:29035"/>
        <label>4</label>
    </ligand>
</feature>
<protein>
    <recommendedName>
        <fullName evidence="1">Carbamoyl phosphate synthase large chain</fullName>
        <ecNumber evidence="1">6.3.4.16</ecNumber>
        <ecNumber evidence="1">6.3.5.5</ecNumber>
    </recommendedName>
    <alternativeName>
        <fullName evidence="1">Carbamoyl phosphate synthetase ammonia chain</fullName>
    </alternativeName>
</protein>
<sequence length="1073" mass="117397">MPKRTDIKSILILGAGPIVIGQACEFDYSGAQACKALREEGFRVILVNSNPATIMTDPAMADATYIEPIKWQSVAKIIEKERPDAVLPTMGGQTALNCALDLERHGVLEKFGVEMIGANADTIDKAEDRSRFDKAMKDIGLECPRSGIAHSMEEANAVLEKLGFPCIIRPSFTMGGTGGGIAYNREEFEEICTRGLDLSPTKELLIDESLIGWKEYEMEVVRDKKDNCIIVCSIENFDPMGVHTGDSITVAPAQTLTDKEYQIMRNASLAVLREIGVETGGSNVQFGICPNTGRMVVIEMNPRVSRSSALASKATGFPIAKIAAKLAIGYTLDELQNDITGGRTPASFEPSIDYVVTKLPRFAFEKFPKADARLTTQMKSVGEVMAIGRTFQESLQKALRGLEVGACGLDPKVDLASPEAASILKRELTVPGAERIWYVADAMRSGMTCEEIFNLTGIDMWFLVQMEDLIKEEEKVKTLALSAIDKDYMLRLKRKGFSDQRLAVLLGITDKNLRRHRHKLEVFPVYKRVDTCAAEFATDTAYLYSTYEEECEANPSTRDKIMILGGGPNRIGQGIEFDYCCVHAALALREDGYETIMVNCNPETVSTDYDTSDRLYFEPLTLEDVLEVCRVEKPKGVIVHYGGQTPLKLARALEEAGVPIIGTSPDAIDRAEDRERFQQMVQRLSLLQPPNATVRSEEEAIRAAGSIGYPLVVRPSYVLGGRAMEIVYELDELKRYLREAVQVSNDSPVLLDHFLNCAIEMDVDAVCDGTDVVIGAIMQHIEQAGVHSGDSACSLPPYSLSKEVQDEVRVQVKKMALELGVVGLMNVQLALQGDKIYVIEVNPRASRTVPFVSKCIGTSLAMIAARVMAGKTLKELGFTQEIIPNFYSVKEAVFPFAKFPGVDPILGPEMKSTGEVMGVGDSFGEAFAKAQMGASEVLPTGGTAFISVRDDDKPQVAGVARDLIALGFEVVATAGTAKVIEAAGLKVRRVNKVTEGRPHVVDMIKNDEVSLIINTTEGRQSIADSYSIRRNALQHKIYCTTTIAAGEAICEALKFGPEKTVRRLQDLHAGLKA</sequence>